<reference key="1">
    <citation type="journal article" date="2002" name="Nucleic Acids Res.">
        <title>Genome sequence of Shigella flexneri 2a: insights into pathogenicity through comparison with genomes of Escherichia coli K12 and O157.</title>
        <authorList>
            <person name="Jin Q."/>
            <person name="Yuan Z."/>
            <person name="Xu J."/>
            <person name="Wang Y."/>
            <person name="Shen Y."/>
            <person name="Lu W."/>
            <person name="Wang J."/>
            <person name="Liu H."/>
            <person name="Yang J."/>
            <person name="Yang F."/>
            <person name="Zhang X."/>
            <person name="Zhang J."/>
            <person name="Yang G."/>
            <person name="Wu H."/>
            <person name="Qu D."/>
            <person name="Dong J."/>
            <person name="Sun L."/>
            <person name="Xue Y."/>
            <person name="Zhao A."/>
            <person name="Gao Y."/>
            <person name="Zhu J."/>
            <person name="Kan B."/>
            <person name="Ding K."/>
            <person name="Chen S."/>
            <person name="Cheng H."/>
            <person name="Yao Z."/>
            <person name="He B."/>
            <person name="Chen R."/>
            <person name="Ma D."/>
            <person name="Qiang B."/>
            <person name="Wen Y."/>
            <person name="Hou Y."/>
            <person name="Yu J."/>
        </authorList>
    </citation>
    <scope>NUCLEOTIDE SEQUENCE [LARGE SCALE GENOMIC DNA]</scope>
    <source>
        <strain>301 / Serotype 2a</strain>
    </source>
</reference>
<reference key="2">
    <citation type="journal article" date="2003" name="Infect. Immun.">
        <title>Complete genome sequence and comparative genomics of Shigella flexneri serotype 2a strain 2457T.</title>
        <authorList>
            <person name="Wei J."/>
            <person name="Goldberg M.B."/>
            <person name="Burland V."/>
            <person name="Venkatesan M.M."/>
            <person name="Deng W."/>
            <person name="Fournier G."/>
            <person name="Mayhew G.F."/>
            <person name="Plunkett G. III"/>
            <person name="Rose D.J."/>
            <person name="Darling A."/>
            <person name="Mau B."/>
            <person name="Perna N.T."/>
            <person name="Payne S.M."/>
            <person name="Runyen-Janecky L.J."/>
            <person name="Zhou S."/>
            <person name="Schwartz D.C."/>
            <person name="Blattner F.R."/>
        </authorList>
    </citation>
    <scope>NUCLEOTIDE SEQUENCE [LARGE SCALE GENOMIC DNA]</scope>
    <source>
        <strain>ATCC 700930 / 2457T / Serotype 2a</strain>
    </source>
</reference>
<accession>Q83RE0</accession>
<accession>Q7C1J6</accession>
<feature type="chain" id="PRO_1000056582" description="Trans-aconitate 2-methyltransferase">
    <location>
        <begin position="1"/>
        <end position="252"/>
    </location>
</feature>
<comment type="function">
    <text evidence="1">Catalyzes the S-adenosylmethionine monomethyl esterification of trans-aconitate.</text>
</comment>
<comment type="catalytic activity">
    <reaction evidence="1">
        <text>trans-aconitate + S-adenosyl-L-methionine = (E)-3-(methoxycarbonyl)pent-2-enedioate + S-adenosyl-L-homocysteine</text>
        <dbReference type="Rhea" id="RHEA:14969"/>
        <dbReference type="ChEBI" id="CHEBI:15708"/>
        <dbReference type="ChEBI" id="CHEBI:57470"/>
        <dbReference type="ChEBI" id="CHEBI:57856"/>
        <dbReference type="ChEBI" id="CHEBI:59789"/>
        <dbReference type="EC" id="2.1.1.144"/>
    </reaction>
</comment>
<comment type="subcellular location">
    <subcellularLocation>
        <location evidence="1">Cytoplasm</location>
    </subcellularLocation>
</comment>
<comment type="similarity">
    <text evidence="1">Belongs to the methyltransferase superfamily. Tam family.</text>
</comment>
<evidence type="ECO:0000255" key="1">
    <source>
        <dbReference type="HAMAP-Rule" id="MF_00560"/>
    </source>
</evidence>
<name>TAM_SHIFL</name>
<sequence length="252" mass="28988">MSDWNPSLYLHFSAERSRPAVELLARVPLENVEYVADLGCGPGNSTALLHQRWPAARITGIDSSPAMIAEARSALPDCQFVEADIRNWQPEQALDLIFANASLQWLPDHYELFPHLVSLLNPQGVLAVQMPDNWLEPTHVLMREVAWEQNYPDRGREPLAGVHAYYDILSEAGCEVDIWRTTYYHQMPSHQAIIDWVTATGLRPWLQDLTESEQQLFLTRYHQMLEEQYPLQENGQILLAFPRLFIVARRTE</sequence>
<dbReference type="EC" id="2.1.1.144" evidence="1"/>
<dbReference type="EMBL" id="AE005674">
    <property type="protein sequence ID" value="AAN43164.1"/>
    <property type="molecule type" value="Genomic_DNA"/>
</dbReference>
<dbReference type="EMBL" id="AE014073">
    <property type="protein sequence ID" value="AAP17056.1"/>
    <property type="molecule type" value="Genomic_DNA"/>
</dbReference>
<dbReference type="RefSeq" id="NP_707457.1">
    <property type="nucleotide sequence ID" value="NC_004337.2"/>
</dbReference>
<dbReference type="RefSeq" id="WP_001286595.1">
    <property type="nucleotide sequence ID" value="NZ_WPGW01000239.1"/>
</dbReference>
<dbReference type="SMR" id="Q83RE0"/>
<dbReference type="STRING" id="198214.SF1576"/>
<dbReference type="PaxDb" id="198214-SF1576"/>
<dbReference type="GeneID" id="1024758"/>
<dbReference type="KEGG" id="sfl:SF1576"/>
<dbReference type="KEGG" id="sfx:S1702"/>
<dbReference type="PATRIC" id="fig|198214.7.peg.1865"/>
<dbReference type="HOGENOM" id="CLU_037990_5_2_6"/>
<dbReference type="Proteomes" id="UP000001006">
    <property type="component" value="Chromosome"/>
</dbReference>
<dbReference type="Proteomes" id="UP000002673">
    <property type="component" value="Chromosome"/>
</dbReference>
<dbReference type="GO" id="GO:0005737">
    <property type="term" value="C:cytoplasm"/>
    <property type="evidence" value="ECO:0007669"/>
    <property type="project" value="UniProtKB-SubCell"/>
</dbReference>
<dbReference type="GO" id="GO:0030798">
    <property type="term" value="F:trans-aconitate 2-methyltransferase activity"/>
    <property type="evidence" value="ECO:0007669"/>
    <property type="project" value="UniProtKB-UniRule"/>
</dbReference>
<dbReference type="GO" id="GO:0032259">
    <property type="term" value="P:methylation"/>
    <property type="evidence" value="ECO:0007669"/>
    <property type="project" value="UniProtKB-KW"/>
</dbReference>
<dbReference type="CDD" id="cd02440">
    <property type="entry name" value="AdoMet_MTases"/>
    <property type="match status" value="1"/>
</dbReference>
<dbReference type="Gene3D" id="1.10.150.290">
    <property type="entry name" value="S-adenosyl-L-methionine-dependent methyltransferases"/>
    <property type="match status" value="1"/>
</dbReference>
<dbReference type="Gene3D" id="3.40.50.150">
    <property type="entry name" value="Vaccinia Virus protein VP39"/>
    <property type="match status" value="1"/>
</dbReference>
<dbReference type="HAMAP" id="MF_00560">
    <property type="entry name" value="Tran_acon_Me_trans"/>
    <property type="match status" value="1"/>
</dbReference>
<dbReference type="InterPro" id="IPR041698">
    <property type="entry name" value="Methyltransf_25"/>
</dbReference>
<dbReference type="InterPro" id="IPR029063">
    <property type="entry name" value="SAM-dependent_MTases_sf"/>
</dbReference>
<dbReference type="InterPro" id="IPR023506">
    <property type="entry name" value="Trans-aconitate_MeTrfase"/>
</dbReference>
<dbReference type="InterPro" id="IPR023149">
    <property type="entry name" value="Trans_acon_MeTrfase_C"/>
</dbReference>
<dbReference type="NCBIfam" id="NF002463">
    <property type="entry name" value="PRK01683.1"/>
    <property type="match status" value="1"/>
</dbReference>
<dbReference type="PANTHER" id="PTHR43861:SF1">
    <property type="entry name" value="TRANS-ACONITATE 2-METHYLTRANSFERASE"/>
    <property type="match status" value="1"/>
</dbReference>
<dbReference type="PANTHER" id="PTHR43861">
    <property type="entry name" value="TRANS-ACONITATE 2-METHYLTRANSFERASE-RELATED"/>
    <property type="match status" value="1"/>
</dbReference>
<dbReference type="Pfam" id="PF13649">
    <property type="entry name" value="Methyltransf_25"/>
    <property type="match status" value="1"/>
</dbReference>
<dbReference type="SUPFAM" id="SSF53335">
    <property type="entry name" value="S-adenosyl-L-methionine-dependent methyltransferases"/>
    <property type="match status" value="1"/>
</dbReference>
<proteinExistence type="inferred from homology"/>
<keyword id="KW-0963">Cytoplasm</keyword>
<keyword id="KW-0489">Methyltransferase</keyword>
<keyword id="KW-1185">Reference proteome</keyword>
<keyword id="KW-0949">S-adenosyl-L-methionine</keyword>
<keyword id="KW-0808">Transferase</keyword>
<gene>
    <name evidence="1" type="primary">tam</name>
    <name type="ordered locus">SF1576</name>
    <name type="ordered locus">S1702</name>
</gene>
<protein>
    <recommendedName>
        <fullName evidence="1">Trans-aconitate 2-methyltransferase</fullName>
        <ecNumber evidence="1">2.1.1.144</ecNumber>
    </recommendedName>
</protein>
<organism>
    <name type="scientific">Shigella flexneri</name>
    <dbReference type="NCBI Taxonomy" id="623"/>
    <lineage>
        <taxon>Bacteria</taxon>
        <taxon>Pseudomonadati</taxon>
        <taxon>Pseudomonadota</taxon>
        <taxon>Gammaproteobacteria</taxon>
        <taxon>Enterobacterales</taxon>
        <taxon>Enterobacteriaceae</taxon>
        <taxon>Shigella</taxon>
    </lineage>
</organism>